<geneLocation type="mitochondrion"/>
<name>CYB_LEPOC</name>
<comment type="function">
    <text evidence="2">Component of the ubiquinol-cytochrome c reductase complex (complex III or cytochrome b-c1 complex) that is part of the mitochondrial respiratory chain. The b-c1 complex mediates electron transfer from ubiquinol to cytochrome c. Contributes to the generation of a proton gradient across the mitochondrial membrane that is then used for ATP synthesis.</text>
</comment>
<comment type="cofactor">
    <cofactor evidence="2">
        <name>heme b</name>
        <dbReference type="ChEBI" id="CHEBI:60344"/>
    </cofactor>
    <text evidence="2">Binds 2 heme b groups non-covalently.</text>
</comment>
<comment type="subunit">
    <text evidence="2">The cytochrome bc1 complex contains 3 respiratory subunits (MT-CYB, CYC1 and UQCRFS1), 2 core proteins (UQCRC1 and UQCRC2) and probably 6 low-molecular weight proteins.</text>
</comment>
<comment type="subcellular location">
    <subcellularLocation>
        <location evidence="2">Mitochondrion inner membrane</location>
        <topology evidence="2">Multi-pass membrane protein</topology>
    </subcellularLocation>
</comment>
<comment type="miscellaneous">
    <text evidence="1">Heme 1 (or BL or b562) is low-potential and absorbs at about 562 nm, and heme 2 (or BH or b566) is high-potential and absorbs at about 566 nm.</text>
</comment>
<comment type="similarity">
    <text evidence="3 4">Belongs to the cytochrome b family.</text>
</comment>
<comment type="caution">
    <text evidence="2">The full-length protein contains only eight transmembrane helices, not nine as predicted by bioinformatics tools.</text>
</comment>
<keyword id="KW-0249">Electron transport</keyword>
<keyword id="KW-0349">Heme</keyword>
<keyword id="KW-0408">Iron</keyword>
<keyword id="KW-0472">Membrane</keyword>
<keyword id="KW-0479">Metal-binding</keyword>
<keyword id="KW-0496">Mitochondrion</keyword>
<keyword id="KW-0999">Mitochondrion inner membrane</keyword>
<keyword id="KW-1185">Reference proteome</keyword>
<keyword id="KW-0679">Respiratory chain</keyword>
<keyword id="KW-0812">Transmembrane</keyword>
<keyword id="KW-1133">Transmembrane helix</keyword>
<keyword id="KW-0813">Transport</keyword>
<keyword id="KW-0830">Ubiquinone</keyword>
<dbReference type="EMBL" id="AB042861">
    <property type="protein sequence ID" value="BAB40741.1"/>
    <property type="molecule type" value="Genomic_DNA"/>
</dbReference>
<dbReference type="EMBL" id="M64899">
    <property type="protein sequence ID" value="AAB01465.1"/>
    <property type="molecule type" value="Genomic_DNA"/>
</dbReference>
<dbReference type="RefSeq" id="NP_839849.1">
    <property type="nucleotide sequence ID" value="NC_004744.1"/>
</dbReference>
<dbReference type="SMR" id="P29667"/>
<dbReference type="FunCoup" id="P29667">
    <property type="interactions" value="18"/>
</dbReference>
<dbReference type="STRING" id="7918.ENSLOCP00000022483"/>
<dbReference type="Ensembl" id="ENSLOCT00000025142.1">
    <property type="protein sequence ID" value="ENSLOCP00000022483.1"/>
    <property type="gene ID" value="ENSLOCG00000021000.1"/>
</dbReference>
<dbReference type="GeneID" id="807200"/>
<dbReference type="KEGG" id="loc:807200"/>
<dbReference type="CTD" id="4519"/>
<dbReference type="eggNOG" id="KOG4663">
    <property type="taxonomic scope" value="Eukaryota"/>
</dbReference>
<dbReference type="GeneTree" id="ENSGT00390000017948"/>
<dbReference type="HOGENOM" id="CLU_031114_3_0_1"/>
<dbReference type="InParanoid" id="P29667"/>
<dbReference type="OMA" id="NISAWWN"/>
<dbReference type="OrthoDB" id="244at2759"/>
<dbReference type="Proteomes" id="UP000018468">
    <property type="component" value="Unassembled WGS sequence"/>
</dbReference>
<dbReference type="Bgee" id="ENSLOCG00000021000">
    <property type="expression patterns" value="Expressed in brain and 13 other cell types or tissues"/>
</dbReference>
<dbReference type="GO" id="GO:0016020">
    <property type="term" value="C:membrane"/>
    <property type="evidence" value="ECO:0000318"/>
    <property type="project" value="GO_Central"/>
</dbReference>
<dbReference type="GO" id="GO:0005743">
    <property type="term" value="C:mitochondrial inner membrane"/>
    <property type="evidence" value="ECO:0007669"/>
    <property type="project" value="UniProtKB-SubCell"/>
</dbReference>
<dbReference type="GO" id="GO:0045275">
    <property type="term" value="C:respiratory chain complex III"/>
    <property type="evidence" value="ECO:0000318"/>
    <property type="project" value="GO_Central"/>
</dbReference>
<dbReference type="GO" id="GO:0046872">
    <property type="term" value="F:metal ion binding"/>
    <property type="evidence" value="ECO:0007669"/>
    <property type="project" value="UniProtKB-KW"/>
</dbReference>
<dbReference type="GO" id="GO:0008121">
    <property type="term" value="F:ubiquinol-cytochrome-c reductase activity"/>
    <property type="evidence" value="ECO:0007669"/>
    <property type="project" value="InterPro"/>
</dbReference>
<dbReference type="GO" id="GO:0006122">
    <property type="term" value="P:mitochondrial electron transport, ubiquinol to cytochrome c"/>
    <property type="evidence" value="ECO:0000318"/>
    <property type="project" value="GO_Central"/>
</dbReference>
<dbReference type="CDD" id="cd00290">
    <property type="entry name" value="cytochrome_b_C"/>
    <property type="match status" value="1"/>
</dbReference>
<dbReference type="CDD" id="cd00284">
    <property type="entry name" value="Cytochrome_b_N"/>
    <property type="match status" value="1"/>
</dbReference>
<dbReference type="FunFam" id="1.20.810.10:FF:000002">
    <property type="entry name" value="Cytochrome b"/>
    <property type="match status" value="1"/>
</dbReference>
<dbReference type="Gene3D" id="1.20.810.10">
    <property type="entry name" value="Cytochrome Bc1 Complex, Chain C"/>
    <property type="match status" value="1"/>
</dbReference>
<dbReference type="InterPro" id="IPR005798">
    <property type="entry name" value="Cyt_b/b6_C"/>
</dbReference>
<dbReference type="InterPro" id="IPR036150">
    <property type="entry name" value="Cyt_b/b6_C_sf"/>
</dbReference>
<dbReference type="InterPro" id="IPR005797">
    <property type="entry name" value="Cyt_b/b6_N"/>
</dbReference>
<dbReference type="InterPro" id="IPR027387">
    <property type="entry name" value="Cytb/b6-like_sf"/>
</dbReference>
<dbReference type="InterPro" id="IPR030689">
    <property type="entry name" value="Cytochrome_b"/>
</dbReference>
<dbReference type="InterPro" id="IPR048260">
    <property type="entry name" value="Cytochrome_b_C_euk/bac"/>
</dbReference>
<dbReference type="InterPro" id="IPR048259">
    <property type="entry name" value="Cytochrome_b_N_euk/bac"/>
</dbReference>
<dbReference type="InterPro" id="IPR016174">
    <property type="entry name" value="Di-haem_cyt_TM"/>
</dbReference>
<dbReference type="PANTHER" id="PTHR19271">
    <property type="entry name" value="CYTOCHROME B"/>
    <property type="match status" value="1"/>
</dbReference>
<dbReference type="PANTHER" id="PTHR19271:SF16">
    <property type="entry name" value="CYTOCHROME B"/>
    <property type="match status" value="1"/>
</dbReference>
<dbReference type="Pfam" id="PF00032">
    <property type="entry name" value="Cytochrom_B_C"/>
    <property type="match status" value="1"/>
</dbReference>
<dbReference type="Pfam" id="PF00033">
    <property type="entry name" value="Cytochrome_B"/>
    <property type="match status" value="1"/>
</dbReference>
<dbReference type="PIRSF" id="PIRSF038885">
    <property type="entry name" value="COB"/>
    <property type="match status" value="1"/>
</dbReference>
<dbReference type="SUPFAM" id="SSF81648">
    <property type="entry name" value="a domain/subunit of cytochrome bc1 complex (Ubiquinol-cytochrome c reductase)"/>
    <property type="match status" value="1"/>
</dbReference>
<dbReference type="SUPFAM" id="SSF81342">
    <property type="entry name" value="Transmembrane di-heme cytochromes"/>
    <property type="match status" value="1"/>
</dbReference>
<dbReference type="PROSITE" id="PS51003">
    <property type="entry name" value="CYTB_CTER"/>
    <property type="match status" value="1"/>
</dbReference>
<dbReference type="PROSITE" id="PS51002">
    <property type="entry name" value="CYTB_NTER"/>
    <property type="match status" value="1"/>
</dbReference>
<evidence type="ECO:0000250" key="1"/>
<evidence type="ECO:0000250" key="2">
    <source>
        <dbReference type="UniProtKB" id="P00157"/>
    </source>
</evidence>
<evidence type="ECO:0000255" key="3">
    <source>
        <dbReference type="PROSITE-ProRule" id="PRU00967"/>
    </source>
</evidence>
<evidence type="ECO:0000255" key="4">
    <source>
        <dbReference type="PROSITE-ProRule" id="PRU00968"/>
    </source>
</evidence>
<evidence type="ECO:0000305" key="5"/>
<accession>P29667</accession>
<accession>Q8HQM1</accession>
<feature type="chain" id="PRO_0000061107" description="Cytochrome b">
    <location>
        <begin position="1"/>
        <end position="380"/>
    </location>
</feature>
<feature type="transmembrane region" description="Helical" evidence="2">
    <location>
        <begin position="33"/>
        <end position="53"/>
    </location>
</feature>
<feature type="transmembrane region" description="Helical" evidence="2">
    <location>
        <begin position="77"/>
        <end position="98"/>
    </location>
</feature>
<feature type="transmembrane region" description="Helical" evidence="2">
    <location>
        <begin position="113"/>
        <end position="133"/>
    </location>
</feature>
<feature type="transmembrane region" description="Helical" evidence="2">
    <location>
        <begin position="178"/>
        <end position="198"/>
    </location>
</feature>
<feature type="transmembrane region" description="Helical" evidence="2">
    <location>
        <begin position="226"/>
        <end position="246"/>
    </location>
</feature>
<feature type="transmembrane region" description="Helical" evidence="2">
    <location>
        <begin position="288"/>
        <end position="308"/>
    </location>
</feature>
<feature type="transmembrane region" description="Helical" evidence="2">
    <location>
        <begin position="320"/>
        <end position="340"/>
    </location>
</feature>
<feature type="transmembrane region" description="Helical" evidence="2">
    <location>
        <begin position="347"/>
        <end position="367"/>
    </location>
</feature>
<feature type="binding site" description="axial binding residue" evidence="2">
    <location>
        <position position="83"/>
    </location>
    <ligand>
        <name>heme b</name>
        <dbReference type="ChEBI" id="CHEBI:60344"/>
        <label>b562</label>
    </ligand>
    <ligandPart>
        <name>Fe</name>
        <dbReference type="ChEBI" id="CHEBI:18248"/>
    </ligandPart>
</feature>
<feature type="binding site" description="axial binding residue" evidence="2">
    <location>
        <position position="97"/>
    </location>
    <ligand>
        <name>heme b</name>
        <dbReference type="ChEBI" id="CHEBI:60344"/>
        <label>b566</label>
    </ligand>
    <ligandPart>
        <name>Fe</name>
        <dbReference type="ChEBI" id="CHEBI:18248"/>
    </ligandPart>
</feature>
<feature type="binding site" description="axial binding residue" evidence="2">
    <location>
        <position position="182"/>
    </location>
    <ligand>
        <name>heme b</name>
        <dbReference type="ChEBI" id="CHEBI:60344"/>
        <label>b562</label>
    </ligand>
    <ligandPart>
        <name>Fe</name>
        <dbReference type="ChEBI" id="CHEBI:18248"/>
    </ligandPart>
</feature>
<feature type="binding site" description="axial binding residue" evidence="2">
    <location>
        <position position="196"/>
    </location>
    <ligand>
        <name>heme b</name>
        <dbReference type="ChEBI" id="CHEBI:60344"/>
        <label>b566</label>
    </ligand>
    <ligandPart>
        <name>Fe</name>
        <dbReference type="ChEBI" id="CHEBI:18248"/>
    </ligandPart>
</feature>
<feature type="binding site" evidence="2">
    <location>
        <position position="201"/>
    </location>
    <ligand>
        <name>a ubiquinone</name>
        <dbReference type="ChEBI" id="CHEBI:16389"/>
    </ligand>
</feature>
<feature type="sequence conflict" description="In Ref. 2; AAB01465." evidence="5" ref="2">
    <original>P</original>
    <variation>Q</variation>
    <location>
        <position position="134"/>
    </location>
</feature>
<protein>
    <recommendedName>
        <fullName>Cytochrome b</fullName>
    </recommendedName>
    <alternativeName>
        <fullName>Complex III subunit 3</fullName>
    </alternativeName>
    <alternativeName>
        <fullName>Complex III subunit III</fullName>
    </alternativeName>
    <alternativeName>
        <fullName>Cytochrome b-c1 complex subunit 3</fullName>
    </alternativeName>
    <alternativeName>
        <fullName>Ubiquinol-cytochrome-c reductase complex cytochrome b subunit</fullName>
    </alternativeName>
</protein>
<proteinExistence type="inferred from homology"/>
<organism>
    <name type="scientific">Lepisosteus oculatus</name>
    <name type="common">Spotted gar</name>
    <dbReference type="NCBI Taxonomy" id="7918"/>
    <lineage>
        <taxon>Eukaryota</taxon>
        <taxon>Metazoa</taxon>
        <taxon>Chordata</taxon>
        <taxon>Craniata</taxon>
        <taxon>Vertebrata</taxon>
        <taxon>Euteleostomi</taxon>
        <taxon>Actinopterygii</taxon>
        <taxon>Neopterygii</taxon>
        <taxon>Holostei</taxon>
        <taxon>Semionotiformes</taxon>
        <taxon>Lepisosteidae</taxon>
        <taxon>Lepisosteus</taxon>
    </lineage>
</organism>
<sequence length="380" mass="42763">MANIRKTHPLLKIINGAVIDLPTPSNISAWWNFGSLLGLCLITQTLTGLFLAMHYTADITLAFSSVAHICRDVNYGWLLRNIHANGASFFFICIYLHIARGLYYGSYLYKETWNIGVLLLLLVMMTAFVGYVLPWGQMSFWGATVITNLLSAFPYIGDTLVQWIWGGFSVDNATLTRFFTFHFLLPFIIMGTTMLHLLFLHETGSNNPTGLDSDADKVTFHPYFSYKDLLGFTILLATLSALALLNPNLLGDPENFTPANPLVTPPHIKPEWYFLFAYAILRSIPNKLGGVLALLFSILILVVVPTLHTSKQRSNTFRPSSQTLFWILVANMLVLTWIGGQPVEHPFIIIGQVASVLYFMLFLFFIPLSGWLENKILDWA</sequence>
<reference key="1">
    <citation type="journal article" date="2003" name="Mol. Phylogenet. Evol.">
        <title>Basal actinopterygian relationships: a mitogenomic perspective on the phylogeny of the 'ancient fish.'.</title>
        <authorList>
            <person name="Inoue J.G."/>
            <person name="Miya M."/>
            <person name="Tsukamoto K."/>
            <person name="Nishida M."/>
        </authorList>
    </citation>
    <scope>NUCLEOTIDE SEQUENCE [GENOMIC DNA]</scope>
</reference>
<reference key="2">
    <citation type="journal article" date="1991" name="Mol. Biol. Evol.">
        <title>Phylogenetic relationships of neopterygian fishes, inferred from mitochondrial DNA sequences.</title>
        <authorList>
            <person name="Normark B.B."/>
            <person name="McCune A.R."/>
            <person name="Harrison R.G."/>
        </authorList>
    </citation>
    <scope>NUCLEOTIDE SEQUENCE [GENOMIC DNA] OF 33-134</scope>
</reference>
<gene>
    <name type="primary">mt-cyb</name>
    <name type="synonym">cob</name>
    <name type="synonym">cytb</name>
    <name type="synonym">mtcyb</name>
</gene>